<evidence type="ECO:0000255" key="1">
    <source>
        <dbReference type="HAMAP-Rule" id="MF_00402"/>
    </source>
</evidence>
<evidence type="ECO:0000305" key="2"/>
<accession>B2GD23</accession>
<organism>
    <name type="scientific">Limosilactobacillus fermentum (strain NBRC 3956 / LMG 18251)</name>
    <name type="common">Lactobacillus fermentum</name>
    <dbReference type="NCBI Taxonomy" id="334390"/>
    <lineage>
        <taxon>Bacteria</taxon>
        <taxon>Bacillati</taxon>
        <taxon>Bacillota</taxon>
        <taxon>Bacilli</taxon>
        <taxon>Lactobacillales</taxon>
        <taxon>Lactobacillaceae</taxon>
        <taxon>Limosilactobacillus</taxon>
    </lineage>
</organism>
<reference key="1">
    <citation type="journal article" date="2008" name="DNA Res.">
        <title>Comparative genome analysis of Lactobacillus reuteri and Lactobacillus fermentum reveal a genomic island for reuterin and cobalamin production.</title>
        <authorList>
            <person name="Morita H."/>
            <person name="Toh H."/>
            <person name="Fukuda S."/>
            <person name="Horikawa H."/>
            <person name="Oshima K."/>
            <person name="Suzuki T."/>
            <person name="Murakami M."/>
            <person name="Hisamatsu S."/>
            <person name="Kato Y."/>
            <person name="Takizawa T."/>
            <person name="Fukuoka H."/>
            <person name="Yoshimura T."/>
            <person name="Itoh K."/>
            <person name="O'Sullivan D.J."/>
            <person name="McKay L.L."/>
            <person name="Ohno H."/>
            <person name="Kikuchi J."/>
            <person name="Masaoka T."/>
            <person name="Hattori M."/>
        </authorList>
    </citation>
    <scope>NUCLEOTIDE SEQUENCE [LARGE SCALE GENOMIC DNA]</scope>
    <source>
        <strain>NBRC 3956 / LMG 18251</strain>
    </source>
</reference>
<dbReference type="EMBL" id="AP008937">
    <property type="protein sequence ID" value="BAG27555.1"/>
    <property type="molecule type" value="Genomic_DNA"/>
</dbReference>
<dbReference type="RefSeq" id="WP_003683897.1">
    <property type="nucleotide sequence ID" value="NC_010610.1"/>
</dbReference>
<dbReference type="SMR" id="B2GD23"/>
<dbReference type="KEGG" id="lfe:LAF_1219"/>
<dbReference type="eggNOG" id="COG0335">
    <property type="taxonomic scope" value="Bacteria"/>
</dbReference>
<dbReference type="HOGENOM" id="CLU_103507_2_1_9"/>
<dbReference type="Proteomes" id="UP000001697">
    <property type="component" value="Chromosome"/>
</dbReference>
<dbReference type="GO" id="GO:0022625">
    <property type="term" value="C:cytosolic large ribosomal subunit"/>
    <property type="evidence" value="ECO:0007669"/>
    <property type="project" value="TreeGrafter"/>
</dbReference>
<dbReference type="GO" id="GO:0003735">
    <property type="term" value="F:structural constituent of ribosome"/>
    <property type="evidence" value="ECO:0007669"/>
    <property type="project" value="InterPro"/>
</dbReference>
<dbReference type="GO" id="GO:0006412">
    <property type="term" value="P:translation"/>
    <property type="evidence" value="ECO:0007669"/>
    <property type="project" value="UniProtKB-UniRule"/>
</dbReference>
<dbReference type="FunFam" id="2.30.30.790:FF:000001">
    <property type="entry name" value="50S ribosomal protein L19"/>
    <property type="match status" value="1"/>
</dbReference>
<dbReference type="Gene3D" id="2.30.30.790">
    <property type="match status" value="1"/>
</dbReference>
<dbReference type="HAMAP" id="MF_00402">
    <property type="entry name" value="Ribosomal_bL19"/>
    <property type="match status" value="1"/>
</dbReference>
<dbReference type="InterPro" id="IPR001857">
    <property type="entry name" value="Ribosomal_bL19"/>
</dbReference>
<dbReference type="InterPro" id="IPR018257">
    <property type="entry name" value="Ribosomal_bL19_CS"/>
</dbReference>
<dbReference type="InterPro" id="IPR038657">
    <property type="entry name" value="Ribosomal_bL19_sf"/>
</dbReference>
<dbReference type="InterPro" id="IPR008991">
    <property type="entry name" value="Translation_prot_SH3-like_sf"/>
</dbReference>
<dbReference type="NCBIfam" id="TIGR01024">
    <property type="entry name" value="rplS_bact"/>
    <property type="match status" value="1"/>
</dbReference>
<dbReference type="PANTHER" id="PTHR15680:SF9">
    <property type="entry name" value="LARGE RIBOSOMAL SUBUNIT PROTEIN BL19M"/>
    <property type="match status" value="1"/>
</dbReference>
<dbReference type="PANTHER" id="PTHR15680">
    <property type="entry name" value="RIBOSOMAL PROTEIN L19"/>
    <property type="match status" value="1"/>
</dbReference>
<dbReference type="Pfam" id="PF01245">
    <property type="entry name" value="Ribosomal_L19"/>
    <property type="match status" value="1"/>
</dbReference>
<dbReference type="PIRSF" id="PIRSF002191">
    <property type="entry name" value="Ribosomal_L19"/>
    <property type="match status" value="1"/>
</dbReference>
<dbReference type="PRINTS" id="PR00061">
    <property type="entry name" value="RIBOSOMALL19"/>
</dbReference>
<dbReference type="SUPFAM" id="SSF50104">
    <property type="entry name" value="Translation proteins SH3-like domain"/>
    <property type="match status" value="1"/>
</dbReference>
<dbReference type="PROSITE" id="PS01015">
    <property type="entry name" value="RIBOSOMAL_L19"/>
    <property type="match status" value="1"/>
</dbReference>
<keyword id="KW-1185">Reference proteome</keyword>
<keyword id="KW-0687">Ribonucleoprotein</keyword>
<keyword id="KW-0689">Ribosomal protein</keyword>
<gene>
    <name evidence="1" type="primary">rplS</name>
    <name type="ordered locus">LAF_1219</name>
</gene>
<sequence>MRQNQLIEKVTAGQLRSDIPAFRAGDTVRVHALIVEGTRERVQIFEGVVIKRHGAGISATYTVRKISNGIGVERTFPLHSPRVEKIEVVRYGRVRRAKLYYLRERTGKSARIAERRRDK</sequence>
<name>RL19_LIMF3</name>
<comment type="function">
    <text evidence="1">This protein is located at the 30S-50S ribosomal subunit interface and may play a role in the structure and function of the aminoacyl-tRNA binding site.</text>
</comment>
<comment type="similarity">
    <text evidence="1">Belongs to the bacterial ribosomal protein bL19 family.</text>
</comment>
<feature type="chain" id="PRO_1000193855" description="Large ribosomal subunit protein bL19">
    <location>
        <begin position="1"/>
        <end position="119"/>
    </location>
</feature>
<protein>
    <recommendedName>
        <fullName evidence="1">Large ribosomal subunit protein bL19</fullName>
    </recommendedName>
    <alternativeName>
        <fullName evidence="2">50S ribosomal protein L19</fullName>
    </alternativeName>
</protein>
<proteinExistence type="inferred from homology"/>